<protein>
    <recommendedName>
        <fullName evidence="1">Undecaprenyl-diphosphatase</fullName>
        <ecNumber evidence="1">3.6.1.27</ecNumber>
    </recommendedName>
    <alternativeName>
        <fullName evidence="1">Bacitracin resistance protein</fullName>
    </alternativeName>
    <alternativeName>
        <fullName evidence="1">Undecaprenyl pyrophosphate phosphatase</fullName>
    </alternativeName>
</protein>
<dbReference type="EC" id="3.6.1.27" evidence="1"/>
<dbReference type="EMBL" id="CP000348">
    <property type="protein sequence ID" value="ABJ79318.1"/>
    <property type="molecule type" value="Genomic_DNA"/>
</dbReference>
<dbReference type="RefSeq" id="WP_011670415.1">
    <property type="nucleotide sequence ID" value="NC_008508.1"/>
</dbReference>
<dbReference type="SMR" id="Q050C7"/>
<dbReference type="KEGG" id="lbl:LBL_1883"/>
<dbReference type="HOGENOM" id="CLU_060296_2_0_12"/>
<dbReference type="GO" id="GO:0005886">
    <property type="term" value="C:plasma membrane"/>
    <property type="evidence" value="ECO:0007669"/>
    <property type="project" value="UniProtKB-SubCell"/>
</dbReference>
<dbReference type="GO" id="GO:0050380">
    <property type="term" value="F:undecaprenyl-diphosphatase activity"/>
    <property type="evidence" value="ECO:0007669"/>
    <property type="project" value="UniProtKB-UniRule"/>
</dbReference>
<dbReference type="GO" id="GO:0071555">
    <property type="term" value="P:cell wall organization"/>
    <property type="evidence" value="ECO:0007669"/>
    <property type="project" value="UniProtKB-KW"/>
</dbReference>
<dbReference type="GO" id="GO:0009252">
    <property type="term" value="P:peptidoglycan biosynthetic process"/>
    <property type="evidence" value="ECO:0007669"/>
    <property type="project" value="UniProtKB-KW"/>
</dbReference>
<dbReference type="GO" id="GO:0008360">
    <property type="term" value="P:regulation of cell shape"/>
    <property type="evidence" value="ECO:0007669"/>
    <property type="project" value="UniProtKB-KW"/>
</dbReference>
<dbReference type="GO" id="GO:0046677">
    <property type="term" value="P:response to antibiotic"/>
    <property type="evidence" value="ECO:0007669"/>
    <property type="project" value="UniProtKB-UniRule"/>
</dbReference>
<dbReference type="HAMAP" id="MF_01006">
    <property type="entry name" value="Undec_diphosphatase"/>
    <property type="match status" value="1"/>
</dbReference>
<dbReference type="InterPro" id="IPR003824">
    <property type="entry name" value="UppP"/>
</dbReference>
<dbReference type="PANTHER" id="PTHR30622">
    <property type="entry name" value="UNDECAPRENYL-DIPHOSPHATASE"/>
    <property type="match status" value="1"/>
</dbReference>
<dbReference type="PANTHER" id="PTHR30622:SF3">
    <property type="entry name" value="UNDECAPRENYL-DIPHOSPHATASE"/>
    <property type="match status" value="1"/>
</dbReference>
<dbReference type="Pfam" id="PF02673">
    <property type="entry name" value="BacA"/>
    <property type="match status" value="1"/>
</dbReference>
<comment type="function">
    <text evidence="1">Catalyzes the dephosphorylation of undecaprenyl diphosphate (UPP). Confers resistance to bacitracin.</text>
</comment>
<comment type="catalytic activity">
    <reaction evidence="1">
        <text>di-trans,octa-cis-undecaprenyl diphosphate + H2O = di-trans,octa-cis-undecaprenyl phosphate + phosphate + H(+)</text>
        <dbReference type="Rhea" id="RHEA:28094"/>
        <dbReference type="ChEBI" id="CHEBI:15377"/>
        <dbReference type="ChEBI" id="CHEBI:15378"/>
        <dbReference type="ChEBI" id="CHEBI:43474"/>
        <dbReference type="ChEBI" id="CHEBI:58405"/>
        <dbReference type="ChEBI" id="CHEBI:60392"/>
        <dbReference type="EC" id="3.6.1.27"/>
    </reaction>
</comment>
<comment type="subcellular location">
    <subcellularLocation>
        <location evidence="1">Cell inner membrane</location>
        <topology evidence="1">Multi-pass membrane protein</topology>
    </subcellularLocation>
</comment>
<comment type="miscellaneous">
    <text>Bacitracin is thought to be involved in the inhibition of peptidoglycan synthesis by sequestering undecaprenyl diphosphate, thereby reducing the pool of lipid carrier available.</text>
</comment>
<comment type="similarity">
    <text evidence="1">Belongs to the UppP family.</text>
</comment>
<gene>
    <name evidence="1" type="primary">uppP</name>
    <name type="synonym">bacA</name>
    <name type="ordered locus">LBL_1883</name>
</gene>
<proteinExistence type="inferred from homology"/>
<evidence type="ECO:0000255" key="1">
    <source>
        <dbReference type="HAMAP-Rule" id="MF_01006"/>
    </source>
</evidence>
<reference key="1">
    <citation type="journal article" date="2006" name="Proc. Natl. Acad. Sci. U.S.A.">
        <title>Genome reduction in Leptospira borgpetersenii reflects limited transmission potential.</title>
        <authorList>
            <person name="Bulach D.M."/>
            <person name="Zuerner R.L."/>
            <person name="Wilson P."/>
            <person name="Seemann T."/>
            <person name="McGrath A."/>
            <person name="Cullen P.A."/>
            <person name="Davis J."/>
            <person name="Johnson M."/>
            <person name="Kuczek E."/>
            <person name="Alt D.P."/>
            <person name="Peterson-Burch B."/>
            <person name="Coppel R.L."/>
            <person name="Rood J.I."/>
            <person name="Davies J.K."/>
            <person name="Adler B."/>
        </authorList>
    </citation>
    <scope>NUCLEOTIDE SEQUENCE [LARGE SCALE GENOMIC DNA]</scope>
    <source>
        <strain>L550</strain>
    </source>
</reference>
<sequence>MNHYLNAFLRSIIEAVTEFLPVSSTGHLFLFSSFFPFSGESLEFDDLFDIFIQSGAILSVLFLYREKFGSQMLSSFQYLTKRNSDSQGFYFLVQIVIGAFPILVVGFIAKKFLDTIKARPDLLDILASAWIFGGVLILIAEWFFQKRQGTEEKKTVGFRDAILIGIFQCVALIPGVSRSAATIVTARFLGKDTKSSAEFSFFLAVPVLLAAGIYKLIKHRSILNEVTIPILAFGFLISFLLCTLVIRLFLRYLQKHSFGVFGIYRILLGVGVLVFTKFIR</sequence>
<name>UPPP_LEPBL</name>
<organism>
    <name type="scientific">Leptospira borgpetersenii serovar Hardjo-bovis (strain L550)</name>
    <dbReference type="NCBI Taxonomy" id="355276"/>
    <lineage>
        <taxon>Bacteria</taxon>
        <taxon>Pseudomonadati</taxon>
        <taxon>Spirochaetota</taxon>
        <taxon>Spirochaetia</taxon>
        <taxon>Leptospirales</taxon>
        <taxon>Leptospiraceae</taxon>
        <taxon>Leptospira</taxon>
    </lineage>
</organism>
<accession>Q050C7</accession>
<keyword id="KW-0046">Antibiotic resistance</keyword>
<keyword id="KW-0997">Cell inner membrane</keyword>
<keyword id="KW-1003">Cell membrane</keyword>
<keyword id="KW-0133">Cell shape</keyword>
<keyword id="KW-0961">Cell wall biogenesis/degradation</keyword>
<keyword id="KW-0378">Hydrolase</keyword>
<keyword id="KW-0472">Membrane</keyword>
<keyword id="KW-0573">Peptidoglycan synthesis</keyword>
<keyword id="KW-0812">Transmembrane</keyword>
<keyword id="KW-1133">Transmembrane helix</keyword>
<feature type="chain" id="PRO_0000290721" description="Undecaprenyl-diphosphatase">
    <location>
        <begin position="1"/>
        <end position="280"/>
    </location>
</feature>
<feature type="transmembrane region" description="Helical" evidence="1">
    <location>
        <begin position="19"/>
        <end position="39"/>
    </location>
</feature>
<feature type="transmembrane region" description="Helical" evidence="1">
    <location>
        <begin position="44"/>
        <end position="64"/>
    </location>
</feature>
<feature type="transmembrane region" description="Helical" evidence="1">
    <location>
        <begin position="89"/>
        <end position="109"/>
    </location>
</feature>
<feature type="transmembrane region" description="Helical" evidence="1">
    <location>
        <begin position="125"/>
        <end position="145"/>
    </location>
</feature>
<feature type="transmembrane region" description="Helical" evidence="1">
    <location>
        <begin position="156"/>
        <end position="176"/>
    </location>
</feature>
<feature type="transmembrane region" description="Helical" evidence="1">
    <location>
        <begin position="197"/>
        <end position="217"/>
    </location>
</feature>
<feature type="transmembrane region" description="Helical" evidence="1">
    <location>
        <begin position="226"/>
        <end position="246"/>
    </location>
</feature>
<feature type="transmembrane region" description="Helical" evidence="1">
    <location>
        <begin position="259"/>
        <end position="279"/>
    </location>
</feature>